<name>RIMM_ACTSZ</name>
<reference key="1">
    <citation type="journal article" date="2010" name="BMC Genomics">
        <title>A genomic perspective on the potential of Actinobacillus succinogenes for industrial succinate production.</title>
        <authorList>
            <person name="McKinlay J.B."/>
            <person name="Laivenieks M."/>
            <person name="Schindler B.D."/>
            <person name="McKinlay A.A."/>
            <person name="Siddaramappa S."/>
            <person name="Challacombe J.F."/>
            <person name="Lowry S.R."/>
            <person name="Clum A."/>
            <person name="Lapidus A.L."/>
            <person name="Burkhart K.B."/>
            <person name="Harkins V."/>
            <person name="Vieille C."/>
        </authorList>
    </citation>
    <scope>NUCLEOTIDE SEQUENCE [LARGE SCALE GENOMIC DNA]</scope>
    <source>
        <strain>ATCC 55618 / DSM 22257 / CCUG 43843 / 130Z</strain>
    </source>
</reference>
<gene>
    <name evidence="1" type="primary">rimM</name>
    <name type="ordered locus">Asuc_0519</name>
</gene>
<keyword id="KW-0143">Chaperone</keyword>
<keyword id="KW-0963">Cytoplasm</keyword>
<keyword id="KW-1185">Reference proteome</keyword>
<keyword id="KW-0690">Ribosome biogenesis</keyword>
<keyword id="KW-0698">rRNA processing</keyword>
<proteinExistence type="inferred from homology"/>
<organism>
    <name type="scientific">Actinobacillus succinogenes (strain ATCC 55618 / DSM 22257 / CCUG 43843 / 130Z)</name>
    <dbReference type="NCBI Taxonomy" id="339671"/>
    <lineage>
        <taxon>Bacteria</taxon>
        <taxon>Pseudomonadati</taxon>
        <taxon>Pseudomonadota</taxon>
        <taxon>Gammaproteobacteria</taxon>
        <taxon>Pasteurellales</taxon>
        <taxon>Pasteurellaceae</taxon>
        <taxon>Actinobacillus</taxon>
    </lineage>
</organism>
<feature type="chain" id="PRO_0000321709" description="Ribosome maturation factor RimM">
    <location>
        <begin position="1"/>
        <end position="175"/>
    </location>
</feature>
<feature type="domain" description="PRC barrel" evidence="1">
    <location>
        <begin position="96"/>
        <end position="175"/>
    </location>
</feature>
<dbReference type="EMBL" id="CP000746">
    <property type="protein sequence ID" value="ABR73894.1"/>
    <property type="molecule type" value="Genomic_DNA"/>
</dbReference>
<dbReference type="RefSeq" id="WP_012072274.1">
    <property type="nucleotide sequence ID" value="NC_009655.1"/>
</dbReference>
<dbReference type="SMR" id="A6VLP7"/>
<dbReference type="STRING" id="339671.Asuc_0519"/>
<dbReference type="KEGG" id="asu:Asuc_0519"/>
<dbReference type="eggNOG" id="COG0806">
    <property type="taxonomic scope" value="Bacteria"/>
</dbReference>
<dbReference type="HOGENOM" id="CLU_077636_1_0_6"/>
<dbReference type="OrthoDB" id="9783509at2"/>
<dbReference type="Proteomes" id="UP000001114">
    <property type="component" value="Chromosome"/>
</dbReference>
<dbReference type="GO" id="GO:0005737">
    <property type="term" value="C:cytoplasm"/>
    <property type="evidence" value="ECO:0007669"/>
    <property type="project" value="UniProtKB-SubCell"/>
</dbReference>
<dbReference type="GO" id="GO:0005840">
    <property type="term" value="C:ribosome"/>
    <property type="evidence" value="ECO:0007669"/>
    <property type="project" value="InterPro"/>
</dbReference>
<dbReference type="GO" id="GO:0043022">
    <property type="term" value="F:ribosome binding"/>
    <property type="evidence" value="ECO:0007669"/>
    <property type="project" value="InterPro"/>
</dbReference>
<dbReference type="GO" id="GO:0042274">
    <property type="term" value="P:ribosomal small subunit biogenesis"/>
    <property type="evidence" value="ECO:0007669"/>
    <property type="project" value="UniProtKB-UniRule"/>
</dbReference>
<dbReference type="GO" id="GO:0006364">
    <property type="term" value="P:rRNA processing"/>
    <property type="evidence" value="ECO:0007669"/>
    <property type="project" value="UniProtKB-UniRule"/>
</dbReference>
<dbReference type="Gene3D" id="2.30.30.240">
    <property type="entry name" value="PRC-barrel domain"/>
    <property type="match status" value="1"/>
</dbReference>
<dbReference type="Gene3D" id="2.40.30.60">
    <property type="entry name" value="RimM"/>
    <property type="match status" value="1"/>
</dbReference>
<dbReference type="HAMAP" id="MF_00014">
    <property type="entry name" value="Ribosome_mat_RimM"/>
    <property type="match status" value="1"/>
</dbReference>
<dbReference type="InterPro" id="IPR011033">
    <property type="entry name" value="PRC_barrel-like_sf"/>
</dbReference>
<dbReference type="InterPro" id="IPR056792">
    <property type="entry name" value="PRC_RimM"/>
</dbReference>
<dbReference type="InterPro" id="IPR011961">
    <property type="entry name" value="RimM"/>
</dbReference>
<dbReference type="InterPro" id="IPR002676">
    <property type="entry name" value="RimM_N"/>
</dbReference>
<dbReference type="InterPro" id="IPR036976">
    <property type="entry name" value="RimM_N_sf"/>
</dbReference>
<dbReference type="InterPro" id="IPR009000">
    <property type="entry name" value="Transl_B-barrel_sf"/>
</dbReference>
<dbReference type="NCBIfam" id="TIGR02273">
    <property type="entry name" value="16S_RimM"/>
    <property type="match status" value="1"/>
</dbReference>
<dbReference type="PANTHER" id="PTHR33692">
    <property type="entry name" value="RIBOSOME MATURATION FACTOR RIMM"/>
    <property type="match status" value="1"/>
</dbReference>
<dbReference type="PANTHER" id="PTHR33692:SF1">
    <property type="entry name" value="RIBOSOME MATURATION FACTOR RIMM"/>
    <property type="match status" value="1"/>
</dbReference>
<dbReference type="Pfam" id="PF24986">
    <property type="entry name" value="PRC_RimM"/>
    <property type="match status" value="1"/>
</dbReference>
<dbReference type="Pfam" id="PF01782">
    <property type="entry name" value="RimM"/>
    <property type="match status" value="1"/>
</dbReference>
<dbReference type="SUPFAM" id="SSF50346">
    <property type="entry name" value="PRC-barrel domain"/>
    <property type="match status" value="1"/>
</dbReference>
<dbReference type="SUPFAM" id="SSF50447">
    <property type="entry name" value="Translation proteins"/>
    <property type="match status" value="1"/>
</dbReference>
<sequence>MEQQRIEVVGKLGSTYGIRGWLRIYSSTEYAESIFDYQPWFLKIKGQWQPAELESWKHHNHELIAKLKNVDDRDAAQALTNVEIGVDLSVFPKLEEGDYYWHDLIGCQVVNLQGYTMGTVSEMMETGSNDVLVVRANVKDAFGKQERLIPFLYEKVVKRVDLTTKTIEVDWDAGF</sequence>
<accession>A6VLP7</accession>
<evidence type="ECO:0000255" key="1">
    <source>
        <dbReference type="HAMAP-Rule" id="MF_00014"/>
    </source>
</evidence>
<comment type="function">
    <text evidence="1">An accessory protein needed during the final step in the assembly of 30S ribosomal subunit, possibly for assembly of the head region. Essential for efficient processing of 16S rRNA. May be needed both before and after RbfA during the maturation of 16S rRNA. It has affinity for free ribosomal 30S subunits but not for 70S ribosomes.</text>
</comment>
<comment type="subunit">
    <text evidence="1">Binds ribosomal protein uS19.</text>
</comment>
<comment type="subcellular location">
    <subcellularLocation>
        <location evidence="1">Cytoplasm</location>
    </subcellularLocation>
</comment>
<comment type="domain">
    <text evidence="1">The PRC barrel domain binds ribosomal protein uS19.</text>
</comment>
<comment type="similarity">
    <text evidence="1">Belongs to the RimM family.</text>
</comment>
<protein>
    <recommendedName>
        <fullName evidence="1">Ribosome maturation factor RimM</fullName>
    </recommendedName>
</protein>